<gene>
    <name type="primary">sigI</name>
    <name type="ordered locus">MT1226</name>
</gene>
<feature type="chain" id="PRO_0000428362" description="Probable ECF RNA polymerase sigma factor SigI">
    <location>
        <begin position="1"/>
        <end position="290"/>
    </location>
</feature>
<feature type="DNA-binding region" description="H-T-H motif" evidence="1">
    <location>
        <begin position="137"/>
        <end position="156"/>
    </location>
</feature>
<feature type="region of interest" description="Sigma-70 factor domain-2">
    <location>
        <begin position="11"/>
        <end position="74"/>
    </location>
</feature>
<feature type="region of interest" description="Sigma-70 factor domain-4_2">
    <location>
        <begin position="110"/>
        <end position="162"/>
    </location>
</feature>
<feature type="short sequence motif" description="Polymerase core binding" evidence="2">
    <location>
        <begin position="34"/>
        <end position="37"/>
    </location>
</feature>
<accession>P9WGH2</accession>
<accession>L7N4U5</accession>
<comment type="function">
    <text evidence="1">Sigma factors are initiation factors that promote the attachment of RNA polymerase to specific initiation sites and are then released. Extracytoplasmic function (ECF) sigma factors are held in an inactive form by a cognate anti-sigma factor until released, although no anti-sigma factor is known for this protein (By similarity).</text>
</comment>
<comment type="subunit">
    <text evidence="1">Interacts transiently with the RNA polymerase catalytic core formed by RpoA, RpoB, RpoC and RpoZ (2 alpha, 1 beta, 1 beta' and 1 omega subunit) to form the RNA polymerase holoenzyme that can initiate transcription.</text>
</comment>
<comment type="domain">
    <text evidence="1">The sigma-70 factor domain-2 mediates sequence-specific interaction with the -10 element in promoter DNA, and plays an important role in melting the double-stranded DNA and the formation of the transcription bubble. The sigma-70 factor domain-2 mediates interaction with the RNA polymerase subunits RpoB and RpoC (By similarity).</text>
</comment>
<comment type="domain">
    <text evidence="1">The sigma-70 factor domain-4 contains a helix-turn-helix (H-T-H) motif that mediates interaction with the -35 element in promoter DNA. The domain also mediates interaction with the RNA polymerase subunit RpoA (By similarity).</text>
</comment>
<comment type="similarity">
    <text evidence="3">Belongs to the sigma-70 factor family. ECF subfamily.</text>
</comment>
<dbReference type="EMBL" id="AE000516">
    <property type="protein sequence ID" value="AAK45483.1"/>
    <property type="molecule type" value="Genomic_DNA"/>
</dbReference>
<dbReference type="PIR" id="E70877">
    <property type="entry name" value="E70877"/>
</dbReference>
<dbReference type="RefSeq" id="WP_003406207.1">
    <property type="nucleotide sequence ID" value="NZ_KK341227.1"/>
</dbReference>
<dbReference type="SMR" id="P9WGH2"/>
<dbReference type="KEGG" id="mtc:MT1226"/>
<dbReference type="PATRIC" id="fig|83331.31.peg.1325"/>
<dbReference type="HOGENOM" id="CLU_047691_22_0_11"/>
<dbReference type="Proteomes" id="UP000001020">
    <property type="component" value="Chromosome"/>
</dbReference>
<dbReference type="GO" id="GO:0003677">
    <property type="term" value="F:DNA binding"/>
    <property type="evidence" value="ECO:0007669"/>
    <property type="project" value="UniProtKB-KW"/>
</dbReference>
<dbReference type="GO" id="GO:0016987">
    <property type="term" value="F:sigma factor activity"/>
    <property type="evidence" value="ECO:0007669"/>
    <property type="project" value="UniProtKB-KW"/>
</dbReference>
<dbReference type="GO" id="GO:0006352">
    <property type="term" value="P:DNA-templated transcription initiation"/>
    <property type="evidence" value="ECO:0007669"/>
    <property type="project" value="InterPro"/>
</dbReference>
<dbReference type="Gene3D" id="1.10.1740.10">
    <property type="match status" value="1"/>
</dbReference>
<dbReference type="Gene3D" id="1.10.10.10">
    <property type="entry name" value="Winged helix-like DNA-binding domain superfamily/Winged helix DNA-binding domain"/>
    <property type="match status" value="1"/>
</dbReference>
<dbReference type="InterPro" id="IPR052704">
    <property type="entry name" value="ECF_Sigma-70_Domain"/>
</dbReference>
<dbReference type="InterPro" id="IPR032710">
    <property type="entry name" value="NTF2-like_dom_sf"/>
</dbReference>
<dbReference type="InterPro" id="IPR014284">
    <property type="entry name" value="RNA_pol_sigma-70_dom"/>
</dbReference>
<dbReference type="InterPro" id="IPR007627">
    <property type="entry name" value="RNA_pol_sigma70_r2"/>
</dbReference>
<dbReference type="InterPro" id="IPR013249">
    <property type="entry name" value="RNA_pol_sigma70_r4_t2"/>
</dbReference>
<dbReference type="InterPro" id="IPR013325">
    <property type="entry name" value="RNA_pol_sigma_r2"/>
</dbReference>
<dbReference type="InterPro" id="IPR013324">
    <property type="entry name" value="RNA_pol_sigma_r3/r4-like"/>
</dbReference>
<dbReference type="InterPro" id="IPR036388">
    <property type="entry name" value="WH-like_DNA-bd_sf"/>
</dbReference>
<dbReference type="NCBIfam" id="NF007213">
    <property type="entry name" value="PRK09635.1"/>
    <property type="match status" value="1"/>
</dbReference>
<dbReference type="NCBIfam" id="TIGR02937">
    <property type="entry name" value="sigma70-ECF"/>
    <property type="match status" value="1"/>
</dbReference>
<dbReference type="PANTHER" id="PTHR30173:SF43">
    <property type="entry name" value="ECF RNA POLYMERASE SIGMA FACTOR SIGI-RELATED"/>
    <property type="match status" value="1"/>
</dbReference>
<dbReference type="PANTHER" id="PTHR30173">
    <property type="entry name" value="SIGMA 19 FACTOR"/>
    <property type="match status" value="1"/>
</dbReference>
<dbReference type="Pfam" id="PF04542">
    <property type="entry name" value="Sigma70_r2"/>
    <property type="match status" value="1"/>
</dbReference>
<dbReference type="Pfam" id="PF08281">
    <property type="entry name" value="Sigma70_r4_2"/>
    <property type="match status" value="1"/>
</dbReference>
<dbReference type="SUPFAM" id="SSF54427">
    <property type="entry name" value="NTF2-like"/>
    <property type="match status" value="1"/>
</dbReference>
<dbReference type="SUPFAM" id="SSF88946">
    <property type="entry name" value="Sigma2 domain of RNA polymerase sigma factors"/>
    <property type="match status" value="1"/>
</dbReference>
<dbReference type="SUPFAM" id="SSF88659">
    <property type="entry name" value="Sigma3 and sigma4 domains of RNA polymerase sigma factors"/>
    <property type="match status" value="1"/>
</dbReference>
<sequence>MSQHDPVSAAWRAHRAYLVDLAFRMVGDIGVAEDMVQEAFSRLLRAPVGDIDDERGWLIVVTSRLCLDHIKSASTRRERPQDIAAWHDGDASVSSVDPADRVTLDDEVRLALLIMLERLGPAERVVFVLHEIFGLPYQQIATTIGSQASTCRQLAHRARRKINESRIAASVEPAQHRVVTRAFIEACSNGDLDTLLEVLDPGVAGEIDARKGVVVVGADRVGPTILRHWSHPATVLVAQPVCGQPAVLAFVNRALAGVLALSIEAGKITKIHVLVQPSTLDPLRAELGGG</sequence>
<evidence type="ECO:0000250" key="1"/>
<evidence type="ECO:0000255" key="2"/>
<evidence type="ECO:0000305" key="3"/>
<protein>
    <recommendedName>
        <fullName>Probable ECF RNA polymerase sigma factor SigI</fullName>
        <shortName>ECF sigma factor SigI</shortName>
    </recommendedName>
    <alternativeName>
        <fullName>Alternative RNA polymerase sigma factor SigI</fullName>
    </alternativeName>
    <alternativeName>
        <fullName>RNA polymerase sigma-I factor</fullName>
        <shortName>Sigma-I factor</shortName>
    </alternativeName>
</protein>
<organism>
    <name type="scientific">Mycobacterium tuberculosis (strain CDC 1551 / Oshkosh)</name>
    <dbReference type="NCBI Taxonomy" id="83331"/>
    <lineage>
        <taxon>Bacteria</taxon>
        <taxon>Bacillati</taxon>
        <taxon>Actinomycetota</taxon>
        <taxon>Actinomycetes</taxon>
        <taxon>Mycobacteriales</taxon>
        <taxon>Mycobacteriaceae</taxon>
        <taxon>Mycobacterium</taxon>
        <taxon>Mycobacterium tuberculosis complex</taxon>
    </lineage>
</organism>
<name>SIGI_MYCTO</name>
<keyword id="KW-0238">DNA-binding</keyword>
<keyword id="KW-1185">Reference proteome</keyword>
<keyword id="KW-0731">Sigma factor</keyword>
<keyword id="KW-0804">Transcription</keyword>
<keyword id="KW-0805">Transcription regulation</keyword>
<proteinExistence type="inferred from homology"/>
<reference key="1">
    <citation type="journal article" date="2002" name="J. Bacteriol.">
        <title>Whole-genome comparison of Mycobacterium tuberculosis clinical and laboratory strains.</title>
        <authorList>
            <person name="Fleischmann R.D."/>
            <person name="Alland D."/>
            <person name="Eisen J.A."/>
            <person name="Carpenter L."/>
            <person name="White O."/>
            <person name="Peterson J.D."/>
            <person name="DeBoy R.T."/>
            <person name="Dodson R.J."/>
            <person name="Gwinn M.L."/>
            <person name="Haft D.H."/>
            <person name="Hickey E.K."/>
            <person name="Kolonay J.F."/>
            <person name="Nelson W.C."/>
            <person name="Umayam L.A."/>
            <person name="Ermolaeva M.D."/>
            <person name="Salzberg S.L."/>
            <person name="Delcher A."/>
            <person name="Utterback T.R."/>
            <person name="Weidman J.F."/>
            <person name="Khouri H.M."/>
            <person name="Gill J."/>
            <person name="Mikula A."/>
            <person name="Bishai W."/>
            <person name="Jacobs W.R. Jr."/>
            <person name="Venter J.C."/>
            <person name="Fraser C.M."/>
        </authorList>
    </citation>
    <scope>NUCLEOTIDE SEQUENCE [LARGE SCALE GENOMIC DNA]</scope>
    <source>
        <strain>CDC 1551 / Oshkosh</strain>
    </source>
</reference>